<accession>Q96EF0</accession>
<accession>Q5JT99</accession>
<accession>Q9NXP6</accession>
<feature type="chain" id="PRO_0000330034" description="Phosphatidylinositol-3,5-bisphosphate 3-phosphatase MTMR8">
    <location>
        <begin position="1"/>
        <end position="704"/>
    </location>
</feature>
<feature type="domain" description="Myotubularin phosphatase" evidence="3">
    <location>
        <begin position="126"/>
        <end position="500"/>
    </location>
</feature>
<feature type="coiled-coil region" evidence="2">
    <location>
        <begin position="515"/>
        <end position="541"/>
    </location>
</feature>
<feature type="active site" description="Phosphocysteine intermediate" evidence="4">
    <location>
        <position position="338"/>
    </location>
</feature>
<feature type="binding site" evidence="1">
    <location>
        <position position="250"/>
    </location>
    <ligand>
        <name>a 1,2-diacyl-sn-glycero-3-phospho-(1D-myo-inositol-3,5-bisphosphate)</name>
        <dbReference type="ChEBI" id="CHEBI:57923"/>
    </ligand>
</feature>
<feature type="binding site" evidence="1">
    <location>
        <position position="250"/>
    </location>
    <ligand>
        <name>a 1,2-diacyl-sn-glycero-3-phospho-(1D-myo-inositol-3-phosphate)</name>
        <dbReference type="ChEBI" id="CHEBI:58088"/>
    </ligand>
</feature>
<feature type="binding site" evidence="1">
    <location>
        <position position="275"/>
    </location>
    <ligand>
        <name>a 1,2-diacyl-sn-glycero-3-phospho-(1D-myo-inositol-3,5-bisphosphate)</name>
        <dbReference type="ChEBI" id="CHEBI:57923"/>
    </ligand>
</feature>
<feature type="binding site" evidence="1">
    <location>
        <position position="275"/>
    </location>
    <ligand>
        <name>a 1,2-diacyl-sn-glycero-3-phospho-(1D-myo-inositol-3-phosphate)</name>
        <dbReference type="ChEBI" id="CHEBI:58088"/>
    </ligand>
</feature>
<feature type="binding site" evidence="1">
    <location>
        <position position="276"/>
    </location>
    <ligand>
        <name>a 1,2-diacyl-sn-glycero-3-phospho-(1D-myo-inositol-3,5-bisphosphate)</name>
        <dbReference type="ChEBI" id="CHEBI:57923"/>
    </ligand>
</feature>
<feature type="binding site" evidence="1">
    <location>
        <position position="276"/>
    </location>
    <ligand>
        <name>a 1,2-diacyl-sn-glycero-3-phospho-(1D-myo-inositol-3-phosphate)</name>
        <dbReference type="ChEBI" id="CHEBI:58088"/>
    </ligand>
</feature>
<feature type="binding site" evidence="1">
    <location>
        <position position="339"/>
    </location>
    <ligand>
        <name>a 1,2-diacyl-sn-glycero-3-phospho-(1D-myo-inositol-3,5-bisphosphate)</name>
        <dbReference type="ChEBI" id="CHEBI:57923"/>
    </ligand>
</feature>
<feature type="binding site" evidence="1">
    <location>
        <position position="339"/>
    </location>
    <ligand>
        <name>a 1,2-diacyl-sn-glycero-3-phospho-(1D-myo-inositol-3-phosphate)</name>
        <dbReference type="ChEBI" id="CHEBI:58088"/>
    </ligand>
</feature>
<feature type="binding site" evidence="12 14">
    <location>
        <position position="339"/>
    </location>
    <ligand>
        <name>phosphate</name>
        <dbReference type="ChEBI" id="CHEBI:43474"/>
    </ligand>
</feature>
<feature type="binding site" evidence="1">
    <location>
        <position position="340"/>
    </location>
    <ligand>
        <name>a 1,2-diacyl-sn-glycero-3-phospho-(1D-myo-inositol-3,5-bisphosphate)</name>
        <dbReference type="ChEBI" id="CHEBI:57923"/>
    </ligand>
</feature>
<feature type="binding site" evidence="1">
    <location>
        <position position="340"/>
    </location>
    <ligand>
        <name>a 1,2-diacyl-sn-glycero-3-phospho-(1D-myo-inositol-3-phosphate)</name>
        <dbReference type="ChEBI" id="CHEBI:58088"/>
    </ligand>
</feature>
<feature type="binding site" evidence="12 14">
    <location>
        <position position="340"/>
    </location>
    <ligand>
        <name>phosphate</name>
        <dbReference type="ChEBI" id="CHEBI:43474"/>
    </ligand>
</feature>
<feature type="binding site" evidence="1">
    <location>
        <position position="341"/>
    </location>
    <ligand>
        <name>a 1,2-diacyl-sn-glycero-3-phospho-(1D-myo-inositol-3,5-bisphosphate)</name>
        <dbReference type="ChEBI" id="CHEBI:57923"/>
    </ligand>
</feature>
<feature type="binding site" evidence="1">
    <location>
        <position position="341"/>
    </location>
    <ligand>
        <name>a 1,2-diacyl-sn-glycero-3-phospho-(1D-myo-inositol-3-phosphate)</name>
        <dbReference type="ChEBI" id="CHEBI:58088"/>
    </ligand>
</feature>
<feature type="binding site" evidence="1">
    <location>
        <position position="342"/>
    </location>
    <ligand>
        <name>a 1,2-diacyl-sn-glycero-3-phospho-(1D-myo-inositol-3,5-bisphosphate)</name>
        <dbReference type="ChEBI" id="CHEBI:57923"/>
    </ligand>
</feature>
<feature type="binding site" evidence="1">
    <location>
        <position position="342"/>
    </location>
    <ligand>
        <name>a 1,2-diacyl-sn-glycero-3-phospho-(1D-myo-inositol-3-phosphate)</name>
        <dbReference type="ChEBI" id="CHEBI:58088"/>
    </ligand>
</feature>
<feature type="binding site" evidence="12 14">
    <location>
        <position position="342"/>
    </location>
    <ligand>
        <name>phosphate</name>
        <dbReference type="ChEBI" id="CHEBI:43474"/>
    </ligand>
</feature>
<feature type="binding site" evidence="1">
    <location>
        <position position="343"/>
    </location>
    <ligand>
        <name>a 1,2-diacyl-sn-glycero-3-phospho-(1D-myo-inositol-3,5-bisphosphate)</name>
        <dbReference type="ChEBI" id="CHEBI:57923"/>
    </ligand>
</feature>
<feature type="binding site" evidence="1">
    <location>
        <position position="343"/>
    </location>
    <ligand>
        <name>a 1,2-diacyl-sn-glycero-3-phospho-(1D-myo-inositol-3-phosphate)</name>
        <dbReference type="ChEBI" id="CHEBI:58088"/>
    </ligand>
</feature>
<feature type="binding site" evidence="12 14">
    <location>
        <position position="343"/>
    </location>
    <ligand>
        <name>phosphate</name>
        <dbReference type="ChEBI" id="CHEBI:43474"/>
    </ligand>
</feature>
<feature type="binding site" evidence="1">
    <location>
        <position position="344"/>
    </location>
    <ligand>
        <name>a 1,2-diacyl-sn-glycero-3-phospho-(1D-myo-inositol-3,5-bisphosphate)</name>
        <dbReference type="ChEBI" id="CHEBI:57923"/>
    </ligand>
</feature>
<feature type="binding site" evidence="1">
    <location>
        <position position="344"/>
    </location>
    <ligand>
        <name>a 1,2-diacyl-sn-glycero-3-phospho-(1D-myo-inositol-3-phosphate)</name>
        <dbReference type="ChEBI" id="CHEBI:58088"/>
    </ligand>
</feature>
<feature type="binding site" evidence="12 14">
    <location>
        <position position="344"/>
    </location>
    <ligand>
        <name>phosphate</name>
        <dbReference type="ChEBI" id="CHEBI:43474"/>
    </ligand>
</feature>
<feature type="binding site" evidence="1">
    <location>
        <position position="380"/>
    </location>
    <ligand>
        <name>a 1,2-diacyl-sn-glycero-3-phospho-(1D-myo-inositol-3,5-bisphosphate)</name>
        <dbReference type="ChEBI" id="CHEBI:57923"/>
    </ligand>
</feature>
<feature type="binding site" evidence="1">
    <location>
        <position position="384"/>
    </location>
    <ligand>
        <name>a 1,2-diacyl-sn-glycero-3-phospho-(1D-myo-inositol-3,5-bisphosphate)</name>
        <dbReference type="ChEBI" id="CHEBI:57923"/>
    </ligand>
</feature>
<feature type="binding site" evidence="1">
    <location>
        <position position="384"/>
    </location>
    <ligand>
        <name>a 1,2-diacyl-sn-glycero-3-phospho-(1D-myo-inositol-3-phosphate)</name>
        <dbReference type="ChEBI" id="CHEBI:58088"/>
    </ligand>
</feature>
<feature type="splice variant" id="VSP_033007" description="In isoform 2." evidence="9">
    <location>
        <begin position="153"/>
        <end position="265"/>
    </location>
</feature>
<feature type="sequence variant" id="VAR_042688" description="In a breast cancer sample; somatic mutation; dbSNP:rs1406282063." evidence="6">
    <original>W</original>
    <variation>R</variation>
    <location>
        <position position="127"/>
    </location>
</feature>
<feature type="sequence variant" id="VAR_042689" description="In a breast cancer sample; somatic mutation; dbSNP:rs1922872438." evidence="6">
    <original>E</original>
    <variation>K</variation>
    <location>
        <position position="454"/>
    </location>
</feature>
<feature type="mutagenesis site" description="Increased phosphatidylinositol-3,5-bisphosphate 3-phosphatase activity." evidence="8">
    <original>A</original>
    <variation>K</variation>
    <location>
        <position position="253"/>
    </location>
</feature>
<feature type="mutagenesis site" description="Decreased phosphatidylinositol-3,5-bisphosphate 3-phosphatase activity." evidence="8">
    <original>K</original>
    <variation>A</variation>
    <location>
        <position position="255"/>
    </location>
</feature>
<feature type="sequence conflict" description="In Ref. 4; BAA90964." evidence="10" ref="4">
    <original>I</original>
    <variation>S</variation>
    <location>
        <position position="130"/>
    </location>
</feature>
<feature type="helix" evidence="15">
    <location>
        <begin position="126"/>
        <end position="128"/>
    </location>
</feature>
<feature type="helix" evidence="15">
    <location>
        <begin position="134"/>
        <end position="138"/>
    </location>
</feature>
<feature type="strand" evidence="15">
    <location>
        <begin position="142"/>
        <end position="149"/>
    </location>
</feature>
<feature type="turn" evidence="15">
    <location>
        <begin position="151"/>
        <end position="154"/>
    </location>
</feature>
<feature type="strand" evidence="15">
    <location>
        <begin position="155"/>
        <end position="157"/>
    </location>
</feature>
<feature type="strand" evidence="15">
    <location>
        <begin position="163"/>
        <end position="168"/>
    </location>
</feature>
<feature type="helix" evidence="15">
    <location>
        <begin position="173"/>
        <end position="180"/>
    </location>
</feature>
<feature type="helix" evidence="15">
    <location>
        <begin position="184"/>
        <end position="186"/>
    </location>
</feature>
<feature type="strand" evidence="15">
    <location>
        <begin position="190"/>
        <end position="194"/>
    </location>
</feature>
<feature type="turn" evidence="15">
    <location>
        <begin position="196"/>
        <end position="198"/>
    </location>
</feature>
<feature type="strand" evidence="15">
    <location>
        <begin position="201"/>
        <end position="205"/>
    </location>
</feature>
<feature type="turn" evidence="15">
    <location>
        <begin position="211"/>
        <end position="213"/>
    </location>
</feature>
<feature type="helix" evidence="15">
    <location>
        <begin position="217"/>
        <end position="227"/>
    </location>
</feature>
<feature type="strand" evidence="15">
    <location>
        <begin position="232"/>
        <end position="234"/>
    </location>
</feature>
<feature type="strand" evidence="15">
    <location>
        <begin position="236"/>
        <end position="240"/>
    </location>
</feature>
<feature type="helix" evidence="15">
    <location>
        <begin position="244"/>
        <end position="252"/>
    </location>
</feature>
<feature type="turn" evidence="15">
    <location>
        <begin position="260"/>
        <end position="262"/>
    </location>
</feature>
<feature type="strand" evidence="15">
    <location>
        <begin position="266"/>
        <end position="270"/>
    </location>
</feature>
<feature type="helix" evidence="15">
    <location>
        <begin position="276"/>
        <end position="290"/>
    </location>
</feature>
<feature type="strand" evidence="15">
    <location>
        <begin position="292"/>
        <end position="294"/>
    </location>
</feature>
<feature type="helix" evidence="15">
    <location>
        <begin position="297"/>
        <end position="307"/>
    </location>
</feature>
<feature type="helix" evidence="15">
    <location>
        <begin position="309"/>
        <end position="328"/>
    </location>
</feature>
<feature type="strand" evidence="15">
    <location>
        <begin position="334"/>
        <end position="337"/>
    </location>
</feature>
<feature type="strand" evidence="15">
    <location>
        <begin position="339"/>
        <end position="343"/>
    </location>
</feature>
<feature type="helix" evidence="15">
    <location>
        <begin position="344"/>
        <end position="356"/>
    </location>
</feature>
<feature type="helix" evidence="15">
    <location>
        <begin position="358"/>
        <end position="361"/>
    </location>
</feature>
<feature type="helix" evidence="15">
    <location>
        <begin position="363"/>
        <end position="373"/>
    </location>
</feature>
<feature type="turn" evidence="15">
    <location>
        <begin position="374"/>
        <end position="378"/>
    </location>
</feature>
<feature type="helix" evidence="15">
    <location>
        <begin position="381"/>
        <end position="384"/>
    </location>
</feature>
<feature type="helix" evidence="15">
    <location>
        <begin position="398"/>
        <end position="412"/>
    </location>
</feature>
<feature type="turn" evidence="15">
    <location>
        <begin position="414"/>
        <end position="416"/>
    </location>
</feature>
<feature type="helix" evidence="15">
    <location>
        <begin position="421"/>
        <end position="433"/>
    </location>
</feature>
<feature type="strand" evidence="15">
    <location>
        <begin position="441"/>
        <end position="443"/>
    </location>
</feature>
<feature type="helix" evidence="15">
    <location>
        <begin position="444"/>
        <end position="449"/>
    </location>
</feature>
<feature type="helix" evidence="15">
    <location>
        <begin position="452"/>
        <end position="455"/>
    </location>
</feature>
<feature type="helix" evidence="15">
    <location>
        <begin position="459"/>
        <end position="465"/>
    </location>
</feature>
<feature type="helix" evidence="15">
    <location>
        <begin position="467"/>
        <end position="469"/>
    </location>
</feature>
<feature type="helix" evidence="15">
    <location>
        <begin position="490"/>
        <end position="492"/>
    </location>
</feature>
<feature type="turn" evidence="15">
    <location>
        <begin position="497"/>
        <end position="501"/>
    </location>
</feature>
<organism>
    <name type="scientific">Homo sapiens</name>
    <name type="common">Human</name>
    <dbReference type="NCBI Taxonomy" id="9606"/>
    <lineage>
        <taxon>Eukaryota</taxon>
        <taxon>Metazoa</taxon>
        <taxon>Chordata</taxon>
        <taxon>Craniata</taxon>
        <taxon>Vertebrata</taxon>
        <taxon>Euteleostomi</taxon>
        <taxon>Mammalia</taxon>
        <taxon>Eutheria</taxon>
        <taxon>Euarchontoglires</taxon>
        <taxon>Primates</taxon>
        <taxon>Haplorrhini</taxon>
        <taxon>Catarrhini</taxon>
        <taxon>Hominidae</taxon>
        <taxon>Homo</taxon>
    </lineage>
</organism>
<sequence>MDHITVPKVENVKLVDRYVSKKPANGILYLTATHLIYVEASGAARKETWIALHHIATVEKLPITSLGCPLTLRCKNFRVAHFVLDSDLVCHEVYISLLKLSQPALPEDLYAFSYNPKSSKEMRESGWKLIDPISDFGRMGIPNRNWTITDANRNYEICSTYPPEIVVPKSVTLGTVVGSSKFRSKERVPVLSYLYKENNAAICRCSQPLSGFYTRCVDDELLLEAISQTNPGSQFMYVVDTRPKLNAMANRAAGKGYENEDNYANIRFRFMGIENIHVMRSSLQKLLEVCELKTPTMSEFLSGLESSGWLRHIKAIMDAGIFITKAVKVEKASVLVHCSDGWDRTAQVCSVASILLDPFYRTFKGLMILIEKEWISMGHKFSQRCGHLDGDSKEVSPIFTQFLDCIWQLMEQFPCAFEFNENFLLEIHDHVFSCQFGNFLGNCQKDREDLRVYEKTHSVWPFLVQRKPDFRNPLYKGFTMYGVLNPSTVPYNIQFWCGMYNRFDKGLQPKQSMLESLLEIKKQRAMLETDVHELEKKLKVRDEPPEEICTCSQLGNILSQHLGSPLTNPLGFMGINGDLNTLMENGTLSREGGLRAQMDQVKSQGADLHHNCCEIVGSLRAINISGDVGISEAMGISGDMCTFEATGFSKDLGICGAMDISEATGISGNLGISEARGFSGDMGILGDTGISKASTKEADYSKHQ</sequence>
<name>MTMR8_HUMAN</name>
<evidence type="ECO:0000250" key="1">
    <source>
        <dbReference type="UniProtKB" id="Q13614"/>
    </source>
</evidence>
<evidence type="ECO:0000255" key="2"/>
<evidence type="ECO:0000255" key="3">
    <source>
        <dbReference type="PROSITE-ProRule" id="PRU00669"/>
    </source>
</evidence>
<evidence type="ECO:0000255" key="4">
    <source>
        <dbReference type="PROSITE-ProRule" id="PRU10044"/>
    </source>
</evidence>
<evidence type="ECO:0000269" key="5">
    <source>
    </source>
</evidence>
<evidence type="ECO:0000269" key="6">
    <source>
    </source>
</evidence>
<evidence type="ECO:0000269" key="7">
    <source>
    </source>
</evidence>
<evidence type="ECO:0000269" key="8">
    <source>
    </source>
</evidence>
<evidence type="ECO:0000303" key="9">
    <source>
    </source>
</evidence>
<evidence type="ECO:0000305" key="10"/>
<evidence type="ECO:0000305" key="11">
    <source>
    </source>
</evidence>
<evidence type="ECO:0000305" key="12">
    <source>
    </source>
</evidence>
<evidence type="ECO:0000312" key="13">
    <source>
        <dbReference type="HGNC" id="HGNC:16825"/>
    </source>
</evidence>
<evidence type="ECO:0007744" key="14">
    <source>
        <dbReference type="PDB" id="4Y7I"/>
    </source>
</evidence>
<evidence type="ECO:0007829" key="15">
    <source>
        <dbReference type="PDB" id="4Y7I"/>
    </source>
</evidence>
<dbReference type="EC" id="3.1.3.95" evidence="7 8"/>
<dbReference type="EMBL" id="AL034408">
    <property type="status" value="NOT_ANNOTATED_CDS"/>
    <property type="molecule type" value="Genomic_DNA"/>
</dbReference>
<dbReference type="EMBL" id="AL356317">
    <property type="status" value="NOT_ANNOTATED_CDS"/>
    <property type="molecule type" value="Genomic_DNA"/>
</dbReference>
<dbReference type="EMBL" id="CH471132">
    <property type="protein sequence ID" value="EAX05411.1"/>
    <property type="molecule type" value="Genomic_DNA"/>
</dbReference>
<dbReference type="EMBL" id="BC012399">
    <property type="protein sequence ID" value="AAH12399.1"/>
    <property type="molecule type" value="mRNA"/>
</dbReference>
<dbReference type="EMBL" id="AK000133">
    <property type="protein sequence ID" value="BAA90964.1"/>
    <property type="status" value="ALT_INIT"/>
    <property type="molecule type" value="mRNA"/>
</dbReference>
<dbReference type="CCDS" id="CCDS14379.1">
    <molecule id="Q96EF0-1"/>
</dbReference>
<dbReference type="RefSeq" id="NP_060147.2">
    <molecule id="Q96EF0-1"/>
    <property type="nucleotide sequence ID" value="NM_017677.3"/>
</dbReference>
<dbReference type="PDB" id="4Y7I">
    <property type="method" value="X-ray"/>
    <property type="resolution" value="2.80 A"/>
    <property type="chains" value="A/B=122-505"/>
</dbReference>
<dbReference type="PDBsum" id="4Y7I"/>
<dbReference type="SMR" id="Q96EF0"/>
<dbReference type="BioGRID" id="120753">
    <property type="interactions" value="25"/>
</dbReference>
<dbReference type="DIP" id="DIP-60046N"/>
<dbReference type="FunCoup" id="Q96EF0">
    <property type="interactions" value="1265"/>
</dbReference>
<dbReference type="IntAct" id="Q96EF0">
    <property type="interactions" value="11"/>
</dbReference>
<dbReference type="MINT" id="Q96EF0"/>
<dbReference type="STRING" id="9606.ENSP00000363985"/>
<dbReference type="DEPOD" id="MTMR8"/>
<dbReference type="GlyGen" id="Q96EF0">
    <property type="glycosylation" value="1 site, 1 O-linked glycan (1 site)"/>
</dbReference>
<dbReference type="iPTMnet" id="Q96EF0"/>
<dbReference type="MetOSite" id="Q96EF0"/>
<dbReference type="PhosphoSitePlus" id="Q96EF0"/>
<dbReference type="BioMuta" id="MTMR8"/>
<dbReference type="DMDM" id="74751838"/>
<dbReference type="jPOST" id="Q96EF0"/>
<dbReference type="MassIVE" id="Q96EF0"/>
<dbReference type="PaxDb" id="9606-ENSP00000363985"/>
<dbReference type="PeptideAtlas" id="Q96EF0"/>
<dbReference type="ProteomicsDB" id="76401">
    <molecule id="Q96EF0-1"/>
</dbReference>
<dbReference type="ProteomicsDB" id="76402">
    <molecule id="Q96EF0-2"/>
</dbReference>
<dbReference type="Antibodypedia" id="27059">
    <property type="antibodies" value="112 antibodies from 22 providers"/>
</dbReference>
<dbReference type="DNASU" id="55613"/>
<dbReference type="Ensembl" id="ENST00000374852.4">
    <molecule id="Q96EF0-1"/>
    <property type="protein sequence ID" value="ENSP00000363985.3"/>
    <property type="gene ID" value="ENSG00000102043.16"/>
</dbReference>
<dbReference type="GeneID" id="55613"/>
<dbReference type="KEGG" id="hsa:55613"/>
<dbReference type="MANE-Select" id="ENST00000374852.4">
    <property type="protein sequence ID" value="ENSP00000363985.3"/>
    <property type="RefSeq nucleotide sequence ID" value="NM_017677.4"/>
    <property type="RefSeq protein sequence ID" value="NP_060147.2"/>
</dbReference>
<dbReference type="UCSC" id="uc004dvs.4">
    <molecule id="Q96EF0-1"/>
    <property type="organism name" value="human"/>
</dbReference>
<dbReference type="AGR" id="HGNC:16825"/>
<dbReference type="CTD" id="55613"/>
<dbReference type="DisGeNET" id="55613"/>
<dbReference type="GeneCards" id="MTMR8"/>
<dbReference type="HGNC" id="HGNC:16825">
    <property type="gene designation" value="MTMR8"/>
</dbReference>
<dbReference type="HPA" id="ENSG00000102043">
    <property type="expression patterns" value="Low tissue specificity"/>
</dbReference>
<dbReference type="MalaCards" id="MTMR8"/>
<dbReference type="MIM" id="301061">
    <property type="type" value="gene"/>
</dbReference>
<dbReference type="neXtProt" id="NX_Q96EF0"/>
<dbReference type="OpenTargets" id="ENSG00000102043"/>
<dbReference type="PharmGKB" id="PA134942633"/>
<dbReference type="VEuPathDB" id="HostDB:ENSG00000102043"/>
<dbReference type="eggNOG" id="KOG1089">
    <property type="taxonomic scope" value="Eukaryota"/>
</dbReference>
<dbReference type="GeneTree" id="ENSGT00940000162717"/>
<dbReference type="HOGENOM" id="CLU_001839_3_2_1"/>
<dbReference type="InParanoid" id="Q96EF0"/>
<dbReference type="OMA" id="FRFIGIE"/>
<dbReference type="OrthoDB" id="271628at2759"/>
<dbReference type="PAN-GO" id="Q96EF0">
    <property type="GO annotations" value="7 GO annotations based on evolutionary models"/>
</dbReference>
<dbReference type="PhylomeDB" id="Q96EF0"/>
<dbReference type="TreeFam" id="TF315197"/>
<dbReference type="BRENDA" id="3.1.3.95">
    <property type="organism ID" value="2681"/>
</dbReference>
<dbReference type="PathwayCommons" id="Q96EF0"/>
<dbReference type="Reactome" id="R-HSA-1660499">
    <property type="pathway name" value="Synthesis of PIPs at the plasma membrane"/>
</dbReference>
<dbReference type="SignaLink" id="Q96EF0"/>
<dbReference type="BioGRID-ORCS" id="55613">
    <property type="hits" value="9 hits in 793 CRISPR screens"/>
</dbReference>
<dbReference type="ChiTaRS" id="MTMR8">
    <property type="organism name" value="human"/>
</dbReference>
<dbReference type="EvolutionaryTrace" id="Q96EF0"/>
<dbReference type="GenomeRNAi" id="55613"/>
<dbReference type="Pharos" id="Q96EF0">
    <property type="development level" value="Tbio"/>
</dbReference>
<dbReference type="PRO" id="PR:Q96EF0"/>
<dbReference type="Proteomes" id="UP000005640">
    <property type="component" value="Chromosome X"/>
</dbReference>
<dbReference type="RNAct" id="Q96EF0">
    <property type="molecule type" value="protein"/>
</dbReference>
<dbReference type="Bgee" id="ENSG00000102043">
    <property type="expression patterns" value="Expressed in male germ line stem cell (sensu Vertebrata) in testis and 138 other cell types or tissues"/>
</dbReference>
<dbReference type="GO" id="GO:0005737">
    <property type="term" value="C:cytoplasm"/>
    <property type="evidence" value="ECO:0000314"/>
    <property type="project" value="UniProtKB"/>
</dbReference>
<dbReference type="GO" id="GO:0005829">
    <property type="term" value="C:cytosol"/>
    <property type="evidence" value="ECO:0000304"/>
    <property type="project" value="Reactome"/>
</dbReference>
<dbReference type="GO" id="GO:0005635">
    <property type="term" value="C:nuclear envelope"/>
    <property type="evidence" value="ECO:0000314"/>
    <property type="project" value="UniProtKB"/>
</dbReference>
<dbReference type="GO" id="GO:0032991">
    <property type="term" value="C:protein-containing complex"/>
    <property type="evidence" value="ECO:0000314"/>
    <property type="project" value="UniProtKB"/>
</dbReference>
<dbReference type="GO" id="GO:0052629">
    <property type="term" value="F:phosphatidylinositol-3,5-bisphosphate 3-phosphatase activity"/>
    <property type="evidence" value="ECO:0007669"/>
    <property type="project" value="UniProtKB-EC"/>
</dbReference>
<dbReference type="GO" id="GO:0106018">
    <property type="term" value="F:phosphatidylinositol-3,5-bisphosphate phosphatase activity"/>
    <property type="evidence" value="ECO:0000314"/>
    <property type="project" value="UniProtKB"/>
</dbReference>
<dbReference type="GO" id="GO:0004438">
    <property type="term" value="F:phosphatidylinositol-3-phosphate phosphatase activity"/>
    <property type="evidence" value="ECO:0000314"/>
    <property type="project" value="UniProtKB"/>
</dbReference>
<dbReference type="GO" id="GO:0010507">
    <property type="term" value="P:negative regulation of autophagy"/>
    <property type="evidence" value="ECO:0000353"/>
    <property type="project" value="UniProtKB"/>
</dbReference>
<dbReference type="GO" id="GO:0046856">
    <property type="term" value="P:phosphatidylinositol dephosphorylation"/>
    <property type="evidence" value="ECO:0000314"/>
    <property type="project" value="UniProtKB"/>
</dbReference>
<dbReference type="GO" id="GO:0016241">
    <property type="term" value="P:regulation of macroautophagy"/>
    <property type="evidence" value="ECO:0000315"/>
    <property type="project" value="FlyBase"/>
</dbReference>
<dbReference type="CDD" id="cd13345">
    <property type="entry name" value="PH-GRAM_MTMR8"/>
    <property type="match status" value="1"/>
</dbReference>
<dbReference type="CDD" id="cd14584">
    <property type="entry name" value="PTP-MTMR8"/>
    <property type="match status" value="1"/>
</dbReference>
<dbReference type="FunFam" id="2.30.29.30:FF:000135">
    <property type="entry name" value="Myotubularin related protein 6"/>
    <property type="match status" value="1"/>
</dbReference>
<dbReference type="Gene3D" id="2.30.29.30">
    <property type="entry name" value="Pleckstrin-homology domain (PH domain)/Phosphotyrosine-binding domain (PTB)"/>
    <property type="match status" value="1"/>
</dbReference>
<dbReference type="InterPro" id="IPR030591">
    <property type="entry name" value="MTMR8_PTP"/>
</dbReference>
<dbReference type="InterPro" id="IPR030564">
    <property type="entry name" value="Myotubularin"/>
</dbReference>
<dbReference type="InterPro" id="IPR010569">
    <property type="entry name" value="Myotubularin-like_Pase_dom"/>
</dbReference>
<dbReference type="InterPro" id="IPR011993">
    <property type="entry name" value="PH-like_dom_sf"/>
</dbReference>
<dbReference type="InterPro" id="IPR029021">
    <property type="entry name" value="Prot-tyrosine_phosphatase-like"/>
</dbReference>
<dbReference type="InterPro" id="IPR016130">
    <property type="entry name" value="Tyr_Pase_AS"/>
</dbReference>
<dbReference type="InterPro" id="IPR003595">
    <property type="entry name" value="Tyr_Pase_cat"/>
</dbReference>
<dbReference type="PANTHER" id="PTHR10807">
    <property type="entry name" value="MYOTUBULARIN-RELATED"/>
    <property type="match status" value="1"/>
</dbReference>
<dbReference type="PANTHER" id="PTHR10807:SF36">
    <property type="entry name" value="MYOTUBULARIN-RELATED PROTEIN 8"/>
    <property type="match status" value="1"/>
</dbReference>
<dbReference type="Pfam" id="PF06602">
    <property type="entry name" value="Myotub-related"/>
    <property type="match status" value="1"/>
</dbReference>
<dbReference type="Pfam" id="PF21098">
    <property type="entry name" value="PH-GRAM_MTMR6-like"/>
    <property type="match status" value="1"/>
</dbReference>
<dbReference type="SMART" id="SM00404">
    <property type="entry name" value="PTPc_motif"/>
    <property type="match status" value="1"/>
</dbReference>
<dbReference type="SUPFAM" id="SSF52799">
    <property type="entry name" value="(Phosphotyrosine protein) phosphatases II"/>
    <property type="match status" value="1"/>
</dbReference>
<dbReference type="SUPFAM" id="SSF50729">
    <property type="entry name" value="PH domain-like"/>
    <property type="match status" value="1"/>
</dbReference>
<dbReference type="PROSITE" id="PS51339">
    <property type="entry name" value="PPASE_MYOTUBULARIN"/>
    <property type="match status" value="1"/>
</dbReference>
<dbReference type="PROSITE" id="PS00383">
    <property type="entry name" value="TYR_PHOSPHATASE_1"/>
    <property type="match status" value="1"/>
</dbReference>
<proteinExistence type="evidence at protein level"/>
<gene>
    <name evidence="13" type="primary">MTMR8</name>
</gene>
<protein>
    <recommendedName>
        <fullName evidence="12">Phosphatidylinositol-3,5-bisphosphate 3-phosphatase MTMR8</fullName>
        <ecNumber evidence="7 8">3.1.3.95</ecNumber>
    </recommendedName>
    <alternativeName>
        <fullName evidence="13">Myotubularin-related protein 8</fullName>
    </alternativeName>
    <alternativeName>
        <fullName evidence="11">Phosphatidylinositol-3-phosphate phosphatase</fullName>
    </alternativeName>
</protein>
<keyword id="KW-0002">3D-structure</keyword>
<keyword id="KW-0025">Alternative splicing</keyword>
<keyword id="KW-0175">Coiled coil</keyword>
<keyword id="KW-0378">Hydrolase</keyword>
<keyword id="KW-0443">Lipid metabolism</keyword>
<keyword id="KW-0539">Nucleus</keyword>
<keyword id="KW-1267">Proteomics identification</keyword>
<keyword id="KW-1185">Reference proteome</keyword>
<reference key="1">
    <citation type="journal article" date="2005" name="Nature">
        <title>The DNA sequence of the human X chromosome.</title>
        <authorList>
            <person name="Ross M.T."/>
            <person name="Grafham D.V."/>
            <person name="Coffey A.J."/>
            <person name="Scherer S."/>
            <person name="McLay K."/>
            <person name="Muzny D."/>
            <person name="Platzer M."/>
            <person name="Howell G.R."/>
            <person name="Burrows C."/>
            <person name="Bird C.P."/>
            <person name="Frankish A."/>
            <person name="Lovell F.L."/>
            <person name="Howe K.L."/>
            <person name="Ashurst J.L."/>
            <person name="Fulton R.S."/>
            <person name="Sudbrak R."/>
            <person name="Wen G."/>
            <person name="Jones M.C."/>
            <person name="Hurles M.E."/>
            <person name="Andrews T.D."/>
            <person name="Scott C.E."/>
            <person name="Searle S."/>
            <person name="Ramser J."/>
            <person name="Whittaker A."/>
            <person name="Deadman R."/>
            <person name="Carter N.P."/>
            <person name="Hunt S.E."/>
            <person name="Chen R."/>
            <person name="Cree A."/>
            <person name="Gunaratne P."/>
            <person name="Havlak P."/>
            <person name="Hodgson A."/>
            <person name="Metzker M.L."/>
            <person name="Richards S."/>
            <person name="Scott G."/>
            <person name="Steffen D."/>
            <person name="Sodergren E."/>
            <person name="Wheeler D.A."/>
            <person name="Worley K.C."/>
            <person name="Ainscough R."/>
            <person name="Ambrose K.D."/>
            <person name="Ansari-Lari M.A."/>
            <person name="Aradhya S."/>
            <person name="Ashwell R.I."/>
            <person name="Babbage A.K."/>
            <person name="Bagguley C.L."/>
            <person name="Ballabio A."/>
            <person name="Banerjee R."/>
            <person name="Barker G.E."/>
            <person name="Barlow K.F."/>
            <person name="Barrett I.P."/>
            <person name="Bates K.N."/>
            <person name="Beare D.M."/>
            <person name="Beasley H."/>
            <person name="Beasley O."/>
            <person name="Beck A."/>
            <person name="Bethel G."/>
            <person name="Blechschmidt K."/>
            <person name="Brady N."/>
            <person name="Bray-Allen S."/>
            <person name="Bridgeman A.M."/>
            <person name="Brown A.J."/>
            <person name="Brown M.J."/>
            <person name="Bonnin D."/>
            <person name="Bruford E.A."/>
            <person name="Buhay C."/>
            <person name="Burch P."/>
            <person name="Burford D."/>
            <person name="Burgess J."/>
            <person name="Burrill W."/>
            <person name="Burton J."/>
            <person name="Bye J.M."/>
            <person name="Carder C."/>
            <person name="Carrel L."/>
            <person name="Chako J."/>
            <person name="Chapman J.C."/>
            <person name="Chavez D."/>
            <person name="Chen E."/>
            <person name="Chen G."/>
            <person name="Chen Y."/>
            <person name="Chen Z."/>
            <person name="Chinault C."/>
            <person name="Ciccodicola A."/>
            <person name="Clark S.Y."/>
            <person name="Clarke G."/>
            <person name="Clee C.M."/>
            <person name="Clegg S."/>
            <person name="Clerc-Blankenburg K."/>
            <person name="Clifford K."/>
            <person name="Cobley V."/>
            <person name="Cole C.G."/>
            <person name="Conquer J.S."/>
            <person name="Corby N."/>
            <person name="Connor R.E."/>
            <person name="David R."/>
            <person name="Davies J."/>
            <person name="Davis C."/>
            <person name="Davis J."/>
            <person name="Delgado O."/>
            <person name="Deshazo D."/>
            <person name="Dhami P."/>
            <person name="Ding Y."/>
            <person name="Dinh H."/>
            <person name="Dodsworth S."/>
            <person name="Draper H."/>
            <person name="Dugan-Rocha S."/>
            <person name="Dunham A."/>
            <person name="Dunn M."/>
            <person name="Durbin K.J."/>
            <person name="Dutta I."/>
            <person name="Eades T."/>
            <person name="Ellwood M."/>
            <person name="Emery-Cohen A."/>
            <person name="Errington H."/>
            <person name="Evans K.L."/>
            <person name="Faulkner L."/>
            <person name="Francis F."/>
            <person name="Frankland J."/>
            <person name="Fraser A.E."/>
            <person name="Galgoczy P."/>
            <person name="Gilbert J."/>
            <person name="Gill R."/>
            <person name="Gloeckner G."/>
            <person name="Gregory S.G."/>
            <person name="Gribble S."/>
            <person name="Griffiths C."/>
            <person name="Grocock R."/>
            <person name="Gu Y."/>
            <person name="Gwilliam R."/>
            <person name="Hamilton C."/>
            <person name="Hart E.A."/>
            <person name="Hawes A."/>
            <person name="Heath P.D."/>
            <person name="Heitmann K."/>
            <person name="Hennig S."/>
            <person name="Hernandez J."/>
            <person name="Hinzmann B."/>
            <person name="Ho S."/>
            <person name="Hoffs M."/>
            <person name="Howden P.J."/>
            <person name="Huckle E.J."/>
            <person name="Hume J."/>
            <person name="Hunt P.J."/>
            <person name="Hunt A.R."/>
            <person name="Isherwood J."/>
            <person name="Jacob L."/>
            <person name="Johnson D."/>
            <person name="Jones S."/>
            <person name="de Jong P.J."/>
            <person name="Joseph S.S."/>
            <person name="Keenan S."/>
            <person name="Kelly S."/>
            <person name="Kershaw J.K."/>
            <person name="Khan Z."/>
            <person name="Kioschis P."/>
            <person name="Klages S."/>
            <person name="Knights A.J."/>
            <person name="Kosiura A."/>
            <person name="Kovar-Smith C."/>
            <person name="Laird G.K."/>
            <person name="Langford C."/>
            <person name="Lawlor S."/>
            <person name="Leversha M."/>
            <person name="Lewis L."/>
            <person name="Liu W."/>
            <person name="Lloyd C."/>
            <person name="Lloyd D.M."/>
            <person name="Loulseged H."/>
            <person name="Loveland J.E."/>
            <person name="Lovell J.D."/>
            <person name="Lozado R."/>
            <person name="Lu J."/>
            <person name="Lyne R."/>
            <person name="Ma J."/>
            <person name="Maheshwari M."/>
            <person name="Matthews L.H."/>
            <person name="McDowall J."/>
            <person name="McLaren S."/>
            <person name="McMurray A."/>
            <person name="Meidl P."/>
            <person name="Meitinger T."/>
            <person name="Milne S."/>
            <person name="Miner G."/>
            <person name="Mistry S.L."/>
            <person name="Morgan M."/>
            <person name="Morris S."/>
            <person name="Mueller I."/>
            <person name="Mullikin J.C."/>
            <person name="Nguyen N."/>
            <person name="Nordsiek G."/>
            <person name="Nyakatura G."/>
            <person name="O'dell C.N."/>
            <person name="Okwuonu G."/>
            <person name="Palmer S."/>
            <person name="Pandian R."/>
            <person name="Parker D."/>
            <person name="Parrish J."/>
            <person name="Pasternak S."/>
            <person name="Patel D."/>
            <person name="Pearce A.V."/>
            <person name="Pearson D.M."/>
            <person name="Pelan S.E."/>
            <person name="Perez L."/>
            <person name="Porter K.M."/>
            <person name="Ramsey Y."/>
            <person name="Reichwald K."/>
            <person name="Rhodes S."/>
            <person name="Ridler K.A."/>
            <person name="Schlessinger D."/>
            <person name="Schueler M.G."/>
            <person name="Sehra H.K."/>
            <person name="Shaw-Smith C."/>
            <person name="Shen H."/>
            <person name="Sheridan E.M."/>
            <person name="Shownkeen R."/>
            <person name="Skuce C.D."/>
            <person name="Smith M.L."/>
            <person name="Sotheran E.C."/>
            <person name="Steingruber H.E."/>
            <person name="Steward C.A."/>
            <person name="Storey R."/>
            <person name="Swann R.M."/>
            <person name="Swarbreck D."/>
            <person name="Tabor P.E."/>
            <person name="Taudien S."/>
            <person name="Taylor T."/>
            <person name="Teague B."/>
            <person name="Thomas K."/>
            <person name="Thorpe A."/>
            <person name="Timms K."/>
            <person name="Tracey A."/>
            <person name="Trevanion S."/>
            <person name="Tromans A.C."/>
            <person name="d'Urso M."/>
            <person name="Verduzco D."/>
            <person name="Villasana D."/>
            <person name="Waldron L."/>
            <person name="Wall M."/>
            <person name="Wang Q."/>
            <person name="Warren J."/>
            <person name="Warry G.L."/>
            <person name="Wei X."/>
            <person name="West A."/>
            <person name="Whitehead S.L."/>
            <person name="Whiteley M.N."/>
            <person name="Wilkinson J.E."/>
            <person name="Willey D.L."/>
            <person name="Williams G."/>
            <person name="Williams L."/>
            <person name="Williamson A."/>
            <person name="Williamson H."/>
            <person name="Wilming L."/>
            <person name="Woodmansey R.L."/>
            <person name="Wray P.W."/>
            <person name="Yen J."/>
            <person name="Zhang J."/>
            <person name="Zhou J."/>
            <person name="Zoghbi H."/>
            <person name="Zorilla S."/>
            <person name="Buck D."/>
            <person name="Reinhardt R."/>
            <person name="Poustka A."/>
            <person name="Rosenthal A."/>
            <person name="Lehrach H."/>
            <person name="Meindl A."/>
            <person name="Minx P.J."/>
            <person name="Hillier L.W."/>
            <person name="Willard H.F."/>
            <person name="Wilson R.K."/>
            <person name="Waterston R.H."/>
            <person name="Rice C.M."/>
            <person name="Vaudin M."/>
            <person name="Coulson A."/>
            <person name="Nelson D.L."/>
            <person name="Weinstock G."/>
            <person name="Sulston J.E."/>
            <person name="Durbin R.M."/>
            <person name="Hubbard T."/>
            <person name="Gibbs R.A."/>
            <person name="Beck S."/>
            <person name="Rogers J."/>
            <person name="Bentley D.R."/>
        </authorList>
    </citation>
    <scope>NUCLEOTIDE SEQUENCE [LARGE SCALE GENOMIC DNA]</scope>
</reference>
<reference key="2">
    <citation type="submission" date="2005-09" db="EMBL/GenBank/DDBJ databases">
        <authorList>
            <person name="Mural R.J."/>
            <person name="Istrail S."/>
            <person name="Sutton G.G."/>
            <person name="Florea L."/>
            <person name="Halpern A.L."/>
            <person name="Mobarry C.M."/>
            <person name="Lippert R."/>
            <person name="Walenz B."/>
            <person name="Shatkay H."/>
            <person name="Dew I."/>
            <person name="Miller J.R."/>
            <person name="Flanigan M.J."/>
            <person name="Edwards N.J."/>
            <person name="Bolanos R."/>
            <person name="Fasulo D."/>
            <person name="Halldorsson B.V."/>
            <person name="Hannenhalli S."/>
            <person name="Turner R."/>
            <person name="Yooseph S."/>
            <person name="Lu F."/>
            <person name="Nusskern D.R."/>
            <person name="Shue B.C."/>
            <person name="Zheng X.H."/>
            <person name="Zhong F."/>
            <person name="Delcher A.L."/>
            <person name="Huson D.H."/>
            <person name="Kravitz S.A."/>
            <person name="Mouchard L."/>
            <person name="Reinert K."/>
            <person name="Remington K.A."/>
            <person name="Clark A.G."/>
            <person name="Waterman M.S."/>
            <person name="Eichler E.E."/>
            <person name="Adams M.D."/>
            <person name="Hunkapiller M.W."/>
            <person name="Myers E.W."/>
            <person name="Venter J.C."/>
        </authorList>
    </citation>
    <scope>NUCLEOTIDE SEQUENCE [LARGE SCALE GENOMIC DNA]</scope>
</reference>
<reference key="3">
    <citation type="journal article" date="2004" name="Genome Res.">
        <title>The status, quality, and expansion of the NIH full-length cDNA project: the Mammalian Gene Collection (MGC).</title>
        <authorList>
            <consortium name="The MGC Project Team"/>
        </authorList>
    </citation>
    <scope>NUCLEOTIDE SEQUENCE [LARGE SCALE MRNA] (ISOFORM 1)</scope>
    <source>
        <tissue>Ovary</tissue>
    </source>
</reference>
<reference key="4">
    <citation type="journal article" date="2004" name="Nat. Genet.">
        <title>Complete sequencing and characterization of 21,243 full-length human cDNAs.</title>
        <authorList>
            <person name="Ota T."/>
            <person name="Suzuki Y."/>
            <person name="Nishikawa T."/>
            <person name="Otsuki T."/>
            <person name="Sugiyama T."/>
            <person name="Irie R."/>
            <person name="Wakamatsu A."/>
            <person name="Hayashi K."/>
            <person name="Sato H."/>
            <person name="Nagai K."/>
            <person name="Kimura K."/>
            <person name="Makita H."/>
            <person name="Sekine M."/>
            <person name="Obayashi M."/>
            <person name="Nishi T."/>
            <person name="Shibahara T."/>
            <person name="Tanaka T."/>
            <person name="Ishii S."/>
            <person name="Yamamoto J."/>
            <person name="Saito K."/>
            <person name="Kawai Y."/>
            <person name="Isono Y."/>
            <person name="Nakamura Y."/>
            <person name="Nagahari K."/>
            <person name="Murakami K."/>
            <person name="Yasuda T."/>
            <person name="Iwayanagi T."/>
            <person name="Wagatsuma M."/>
            <person name="Shiratori A."/>
            <person name="Sudo H."/>
            <person name="Hosoiri T."/>
            <person name="Kaku Y."/>
            <person name="Kodaira H."/>
            <person name="Kondo H."/>
            <person name="Sugawara M."/>
            <person name="Takahashi M."/>
            <person name="Kanda K."/>
            <person name="Yokoi T."/>
            <person name="Furuya T."/>
            <person name="Kikkawa E."/>
            <person name="Omura Y."/>
            <person name="Abe K."/>
            <person name="Kamihara K."/>
            <person name="Katsuta N."/>
            <person name="Sato K."/>
            <person name="Tanikawa M."/>
            <person name="Yamazaki M."/>
            <person name="Ninomiya K."/>
            <person name="Ishibashi T."/>
            <person name="Yamashita H."/>
            <person name="Murakawa K."/>
            <person name="Fujimori K."/>
            <person name="Tanai H."/>
            <person name="Kimata M."/>
            <person name="Watanabe M."/>
            <person name="Hiraoka S."/>
            <person name="Chiba Y."/>
            <person name="Ishida S."/>
            <person name="Ono Y."/>
            <person name="Takiguchi S."/>
            <person name="Watanabe S."/>
            <person name="Yosida M."/>
            <person name="Hotuta T."/>
            <person name="Kusano J."/>
            <person name="Kanehori K."/>
            <person name="Takahashi-Fujii A."/>
            <person name="Hara H."/>
            <person name="Tanase T.-O."/>
            <person name="Nomura Y."/>
            <person name="Togiya S."/>
            <person name="Komai F."/>
            <person name="Hara R."/>
            <person name="Takeuchi K."/>
            <person name="Arita M."/>
            <person name="Imose N."/>
            <person name="Musashino K."/>
            <person name="Yuuki H."/>
            <person name="Oshima A."/>
            <person name="Sasaki N."/>
            <person name="Aotsuka S."/>
            <person name="Yoshikawa Y."/>
            <person name="Matsunawa H."/>
            <person name="Ichihara T."/>
            <person name="Shiohata N."/>
            <person name="Sano S."/>
            <person name="Moriya S."/>
            <person name="Momiyama H."/>
            <person name="Satoh N."/>
            <person name="Takami S."/>
            <person name="Terashima Y."/>
            <person name="Suzuki O."/>
            <person name="Nakagawa S."/>
            <person name="Senoh A."/>
            <person name="Mizoguchi H."/>
            <person name="Goto Y."/>
            <person name="Shimizu F."/>
            <person name="Wakebe H."/>
            <person name="Hishigaki H."/>
            <person name="Watanabe T."/>
            <person name="Sugiyama A."/>
            <person name="Takemoto M."/>
            <person name="Kawakami B."/>
            <person name="Yamazaki M."/>
            <person name="Watanabe K."/>
            <person name="Kumagai A."/>
            <person name="Itakura S."/>
            <person name="Fukuzumi Y."/>
            <person name="Fujimori Y."/>
            <person name="Komiyama M."/>
            <person name="Tashiro H."/>
            <person name="Tanigami A."/>
            <person name="Fujiwara T."/>
            <person name="Ono T."/>
            <person name="Yamada K."/>
            <person name="Fujii Y."/>
            <person name="Ozaki K."/>
            <person name="Hirao M."/>
            <person name="Ohmori Y."/>
            <person name="Kawabata A."/>
            <person name="Hikiji T."/>
            <person name="Kobatake N."/>
            <person name="Inagaki H."/>
            <person name="Ikema Y."/>
            <person name="Okamoto S."/>
            <person name="Okitani R."/>
            <person name="Kawakami T."/>
            <person name="Noguchi S."/>
            <person name="Itoh T."/>
            <person name="Shigeta K."/>
            <person name="Senba T."/>
            <person name="Matsumura K."/>
            <person name="Nakajima Y."/>
            <person name="Mizuno T."/>
            <person name="Morinaga M."/>
            <person name="Sasaki M."/>
            <person name="Togashi T."/>
            <person name="Oyama M."/>
            <person name="Hata H."/>
            <person name="Watanabe M."/>
            <person name="Komatsu T."/>
            <person name="Mizushima-Sugano J."/>
            <person name="Satoh T."/>
            <person name="Shirai Y."/>
            <person name="Takahashi Y."/>
            <person name="Nakagawa K."/>
            <person name="Okumura K."/>
            <person name="Nagase T."/>
            <person name="Nomura N."/>
            <person name="Kikuchi H."/>
            <person name="Masuho Y."/>
            <person name="Yamashita R."/>
            <person name="Nakai K."/>
            <person name="Yada T."/>
            <person name="Nakamura Y."/>
            <person name="Ohara O."/>
            <person name="Isogai T."/>
            <person name="Sugano S."/>
        </authorList>
    </citation>
    <scope>NUCLEOTIDE SEQUENCE [LARGE SCALE MRNA] OF 85-704 (ISOFORM 2)</scope>
    <source>
        <tissue>Colon</tissue>
    </source>
</reference>
<reference key="5">
    <citation type="journal article" date="2006" name="J. Cell Sci.">
        <title>Systematic analysis of myotubularins: heteromeric interactions, subcellular localisation and endosome related functions.</title>
        <authorList>
            <person name="Lorenzo O."/>
            <person name="Urbe S."/>
            <person name="Clague M.J."/>
        </authorList>
    </citation>
    <scope>SUBCELLULAR LOCATION</scope>
    <scope>INTERACTION WITH MTMR9</scope>
</reference>
<reference key="6">
    <citation type="journal article" date="2012" name="Proc. Natl. Acad. Sci. U.S.A.">
        <title>Myotubularin-related protein (MTMR) 9 determines the enzymatic activity, substrate specificity, and role in autophagy of MTMR8.</title>
        <authorList>
            <person name="Zou J."/>
            <person name="Zhang C."/>
            <person name="Marjanovic J."/>
            <person name="Kisseleva M.V."/>
            <person name="Majerus P.W."/>
            <person name="Wilson M.P."/>
        </authorList>
    </citation>
    <scope>FUNCTION</scope>
    <scope>CATALYTIC ACTIVITY</scope>
    <scope>ACTIVITY REGULATION</scope>
    <scope>INTERACTION WITH MTMR9</scope>
</reference>
<reference key="7">
    <citation type="journal article" date="2015" name="Acta Crystallogr. D">
        <title>Structure of the catalytic phosphatase domain of MTMR8: implications for dimerization, membrane association and reversible oxidation.</title>
        <authorList>
            <person name="Yoo K.Y."/>
            <person name="Son J.Y."/>
            <person name="Lee J.U."/>
            <person name="Shin W."/>
            <person name="Im D.W."/>
            <person name="Kim S.J."/>
            <person name="Ryu S.E."/>
            <person name="Heo Y.S."/>
        </authorList>
    </citation>
    <scope>X-RAY CRYSTALLOGRAPHY (2.80 ANGSTROMS) OF 122-505 IN COMPLEX WITH PHOSPHATE</scope>
    <scope>FUNCTION</scope>
    <scope>CATALYTIC ACTIVITY</scope>
    <scope>ACTIVITY REGULATION</scope>
    <scope>BIOPHYSICOCHEMICAL PROPERTIES</scope>
    <scope>SUBUNIT</scope>
    <scope>MUTAGENESIS OF ALA-253 AND LYS-255</scope>
</reference>
<reference key="8">
    <citation type="journal article" date="2006" name="Science">
        <title>The consensus coding sequences of human breast and colorectal cancers.</title>
        <authorList>
            <person name="Sjoeblom T."/>
            <person name="Jones S."/>
            <person name="Wood L.D."/>
            <person name="Parsons D.W."/>
            <person name="Lin J."/>
            <person name="Barber T.D."/>
            <person name="Mandelker D."/>
            <person name="Leary R.J."/>
            <person name="Ptak J."/>
            <person name="Silliman N."/>
            <person name="Szabo S."/>
            <person name="Buckhaults P."/>
            <person name="Farrell C."/>
            <person name="Meeh P."/>
            <person name="Markowitz S.D."/>
            <person name="Willis J."/>
            <person name="Dawson D."/>
            <person name="Willson J.K.V."/>
            <person name="Gazdar A.F."/>
            <person name="Hartigan J."/>
            <person name="Wu L."/>
            <person name="Liu C."/>
            <person name="Parmigiani G."/>
            <person name="Park B.H."/>
            <person name="Bachman K.E."/>
            <person name="Papadopoulos N."/>
            <person name="Vogelstein B."/>
            <person name="Kinzler K.W."/>
            <person name="Velculescu V.E."/>
        </authorList>
    </citation>
    <scope>VARIANTS [LARGE SCALE ANALYSIS] ARG-127 AND LYS-454</scope>
</reference>
<comment type="function">
    <text evidence="7 8">Lipid phosphatase that specifically dephosphorylates the D-3 position of phosphatidylinositol 3-phosphate and phosphatidylinositol 3,5-bisphosphate, generating phosphatidylinositol and phosphatidylinositol 5-phosphate (PubMed:22647598, PubMed:26143924). In complex with MTMR9, negatively regulates autophagy (PubMed:22647598).</text>
</comment>
<comment type="catalytic activity">
    <reaction evidence="7 8">
        <text>a 1,2-diacyl-sn-glycero-3-phospho-(1D-myo-inositol-3,5-bisphosphate) + H2O = a 1,2-diacyl-sn-glycero-3-phospho-(1D-myo-inositol-5-phosphate) + phosphate</text>
        <dbReference type="Rhea" id="RHEA:39019"/>
        <dbReference type="ChEBI" id="CHEBI:15377"/>
        <dbReference type="ChEBI" id="CHEBI:43474"/>
        <dbReference type="ChEBI" id="CHEBI:57795"/>
        <dbReference type="ChEBI" id="CHEBI:57923"/>
        <dbReference type="EC" id="3.1.3.95"/>
    </reaction>
</comment>
<comment type="catalytic activity">
    <reaction evidence="7">
        <text>a 1,2-diacyl-sn-glycero-3-phospho-(1D-myo-inositol-3-phosphate) + H2O = a 1,2-diacyl-sn-glycero-3-phospho-(1D-myo-inositol) + phosphate</text>
        <dbReference type="Rhea" id="RHEA:12316"/>
        <dbReference type="ChEBI" id="CHEBI:15377"/>
        <dbReference type="ChEBI" id="CHEBI:43474"/>
        <dbReference type="ChEBI" id="CHEBI:57880"/>
        <dbReference type="ChEBI" id="CHEBI:58088"/>
    </reaction>
</comment>
<comment type="catalytic activity">
    <reaction evidence="8">
        <text>1,2-dioctanoyl-sn-glycero-3-phospho-(1D-myo-inositol-3,5-bisphosphate) + H2O = 1,2-dioctanoyl-sn-glycero-3-phospho-(1D-myo-inositol-5-phosphate) + phosphate</text>
        <dbReference type="Rhea" id="RHEA:45632"/>
        <dbReference type="ChEBI" id="CHEBI:15377"/>
        <dbReference type="ChEBI" id="CHEBI:43474"/>
        <dbReference type="ChEBI" id="CHEBI:78911"/>
        <dbReference type="ChEBI" id="CHEBI:85342"/>
    </reaction>
</comment>
<comment type="activity regulation">
    <text evidence="7">Interaction with MTMR9 increases phosphatase activity.</text>
</comment>
<comment type="biophysicochemical properties">
    <kinetics>
        <KM evidence="8">16.64 uM for phosphatidylinositol 3,5-biphosphate</KM>
    </kinetics>
</comment>
<comment type="subunit">
    <text evidence="5 7 8">Homodimer (PubMed:26143924). Heterodimer with MTMR9 (PubMed:16787938, PubMed:22647598).</text>
</comment>
<comment type="interaction">
    <interactant intactId="EBI-750578">
        <id>Q96EF0</id>
    </interactant>
    <interactant intactId="EBI-744593">
        <id>Q96QG7</id>
        <label>MTMR9</label>
    </interactant>
    <organismsDiffer>false</organismsDiffer>
    <experiments>8</experiments>
</comment>
<comment type="interaction">
    <interactant intactId="EBI-15985865">
        <id>Q96EF0-1</id>
    </interactant>
    <interactant intactId="EBI-744593">
        <id>Q96QG7</id>
        <label>MTMR9</label>
    </interactant>
    <organismsDiffer>false</organismsDiffer>
    <experiments>3</experiments>
</comment>
<comment type="subcellular location">
    <subcellularLocation>
        <location evidence="5">Nucleus envelope</location>
    </subcellularLocation>
</comment>
<comment type="alternative products">
    <event type="alternative splicing"/>
    <isoform>
        <id>Q96EF0-1</id>
        <name>1</name>
        <sequence type="displayed"/>
    </isoform>
    <isoform>
        <id>Q96EF0-2</id>
        <name>2</name>
        <sequence type="described" ref="VSP_033007"/>
    </isoform>
</comment>
<comment type="similarity">
    <text evidence="10">Belongs to the protein-tyrosine phosphatase family. Non-receptor class myotubularin subfamily.</text>
</comment>
<comment type="sequence caution" evidence="10">
    <conflict type="erroneous initiation">
        <sequence resource="EMBL-CDS" id="BAA90964"/>
    </conflict>
</comment>